<evidence type="ECO:0000256" key="1">
    <source>
        <dbReference type="SAM" id="MobiDB-lite"/>
    </source>
</evidence>
<evidence type="ECO:0000269" key="2">
    <source>
    </source>
</evidence>
<evidence type="ECO:0000269" key="3">
    <source>
    </source>
</evidence>
<evidence type="ECO:0000269" key="4">
    <source>
    </source>
</evidence>
<evidence type="ECO:0000269" key="5">
    <source>
    </source>
</evidence>
<evidence type="ECO:0000269" key="6">
    <source>
    </source>
</evidence>
<evidence type="ECO:0000305" key="7"/>
<organism>
    <name type="scientific">Saccharomyces cerevisiae (strain ATCC 204508 / S288c)</name>
    <name type="common">Baker's yeast</name>
    <dbReference type="NCBI Taxonomy" id="559292"/>
    <lineage>
        <taxon>Eukaryota</taxon>
        <taxon>Fungi</taxon>
        <taxon>Dikarya</taxon>
        <taxon>Ascomycota</taxon>
        <taxon>Saccharomycotina</taxon>
        <taxon>Saccharomycetes</taxon>
        <taxon>Saccharomycetales</taxon>
        <taxon>Saccharomycetaceae</taxon>
        <taxon>Saccharomyces</taxon>
    </lineage>
</organism>
<gene>
    <name type="primary">SPP381</name>
    <name type="ordered locus">YBR152W</name>
    <name type="ORF">YBR1202</name>
</gene>
<accession>P38282</accession>
<accession>D6VQE7</accession>
<dbReference type="EMBL" id="Z36021">
    <property type="protein sequence ID" value="CAA85111.1"/>
    <property type="molecule type" value="Genomic_DNA"/>
</dbReference>
<dbReference type="EMBL" id="AY693054">
    <property type="protein sequence ID" value="AAT93073.1"/>
    <property type="molecule type" value="Genomic_DNA"/>
</dbReference>
<dbReference type="EMBL" id="BK006936">
    <property type="protein sequence ID" value="DAA07267.1"/>
    <property type="molecule type" value="Genomic_DNA"/>
</dbReference>
<dbReference type="PIR" id="S46023">
    <property type="entry name" value="S46023"/>
</dbReference>
<dbReference type="RefSeq" id="NP_009710.3">
    <property type="nucleotide sequence ID" value="NM_001178500.3"/>
</dbReference>
<dbReference type="PDB" id="5NRL">
    <property type="method" value="EM"/>
    <property type="resolution" value="7.20 A"/>
    <property type="chains" value="N=1-291"/>
</dbReference>
<dbReference type="PDB" id="5ZWO">
    <property type="method" value="EM"/>
    <property type="resolution" value="3.90 A"/>
    <property type="chains" value="9=1-291"/>
</dbReference>
<dbReference type="PDBsum" id="5NRL"/>
<dbReference type="PDBsum" id="5ZWO"/>
<dbReference type="EMDB" id="EMD-3683"/>
<dbReference type="EMDB" id="EMD-6974"/>
<dbReference type="SMR" id="P38282"/>
<dbReference type="BioGRID" id="32851">
    <property type="interactions" value="170"/>
</dbReference>
<dbReference type="ComplexPortal" id="CPX-25">
    <property type="entry name" value="U4/U6.U5 tri-small nuclear ribonucleoprotein complex"/>
</dbReference>
<dbReference type="DIP" id="DIP-2461N"/>
<dbReference type="FunCoup" id="P38282">
    <property type="interactions" value="176"/>
</dbReference>
<dbReference type="IntAct" id="P38282">
    <property type="interactions" value="36"/>
</dbReference>
<dbReference type="MINT" id="P38282"/>
<dbReference type="STRING" id="4932.YBR152W"/>
<dbReference type="iPTMnet" id="P38282"/>
<dbReference type="PaxDb" id="4932-YBR152W"/>
<dbReference type="PeptideAtlas" id="P38282"/>
<dbReference type="EnsemblFungi" id="YBR152W_mRNA">
    <property type="protein sequence ID" value="YBR152W"/>
    <property type="gene ID" value="YBR152W"/>
</dbReference>
<dbReference type="GeneID" id="852449"/>
<dbReference type="KEGG" id="sce:YBR152W"/>
<dbReference type="AGR" id="SGD:S000000356"/>
<dbReference type="SGD" id="S000000356">
    <property type="gene designation" value="SPP381"/>
</dbReference>
<dbReference type="VEuPathDB" id="FungiDB:YBR152W"/>
<dbReference type="eggNOG" id="ENOG502S80M">
    <property type="taxonomic scope" value="Eukaryota"/>
</dbReference>
<dbReference type="HOGENOM" id="CLU_1107827_0_0_1"/>
<dbReference type="InParanoid" id="P38282"/>
<dbReference type="OMA" id="WFERQNE"/>
<dbReference type="OrthoDB" id="4070429at2759"/>
<dbReference type="BioCyc" id="YEAST:G3O-29103-MONOMER"/>
<dbReference type="BioGRID-ORCS" id="852449">
    <property type="hits" value="2 hits in 10 CRISPR screens"/>
</dbReference>
<dbReference type="PRO" id="PR:P38282"/>
<dbReference type="Proteomes" id="UP000002311">
    <property type="component" value="Chromosome II"/>
</dbReference>
<dbReference type="RNAct" id="P38282">
    <property type="molecule type" value="protein"/>
</dbReference>
<dbReference type="GO" id="GO:0005829">
    <property type="term" value="C:cytosol"/>
    <property type="evidence" value="ECO:0000314"/>
    <property type="project" value="SGD"/>
</dbReference>
<dbReference type="GO" id="GO:0005634">
    <property type="term" value="C:nucleus"/>
    <property type="evidence" value="ECO:0000314"/>
    <property type="project" value="SGD"/>
</dbReference>
<dbReference type="GO" id="GO:0005681">
    <property type="term" value="C:spliceosomal complex"/>
    <property type="evidence" value="ECO:0000303"/>
    <property type="project" value="ComplexPortal"/>
</dbReference>
<dbReference type="GO" id="GO:0046540">
    <property type="term" value="C:U4/U6 x U5 tri-snRNP complex"/>
    <property type="evidence" value="ECO:0000314"/>
    <property type="project" value="SGD"/>
</dbReference>
<dbReference type="GO" id="GO:0003723">
    <property type="term" value="F:RNA binding"/>
    <property type="evidence" value="ECO:0007669"/>
    <property type="project" value="UniProtKB-KW"/>
</dbReference>
<dbReference type="GO" id="GO:0000349">
    <property type="term" value="P:generation of catalytic spliceosome for first transesterification step"/>
    <property type="evidence" value="ECO:0000316"/>
    <property type="project" value="SGD"/>
</dbReference>
<dbReference type="GO" id="GO:0000398">
    <property type="term" value="P:mRNA splicing, via spliceosome"/>
    <property type="evidence" value="ECO:0000315"/>
    <property type="project" value="SGD"/>
</dbReference>
<feature type="chain" id="PRO_0000202498" description="Pre-mRNA-splicing factor SPP381">
    <location>
        <begin position="1"/>
        <end position="291"/>
    </location>
</feature>
<feature type="region of interest" description="Disordered" evidence="1">
    <location>
        <begin position="1"/>
        <end position="99"/>
    </location>
</feature>
<feature type="region of interest" description="Disordered" evidence="1">
    <location>
        <begin position="239"/>
        <end position="266"/>
    </location>
</feature>
<feature type="compositionally biased region" description="Polar residues" evidence="1">
    <location>
        <begin position="28"/>
        <end position="41"/>
    </location>
</feature>
<feature type="compositionally biased region" description="Polar residues" evidence="1">
    <location>
        <begin position="52"/>
        <end position="62"/>
    </location>
</feature>
<feature type="compositionally biased region" description="Acidic residues" evidence="1">
    <location>
        <begin position="63"/>
        <end position="91"/>
    </location>
</feature>
<feature type="compositionally biased region" description="Basic and acidic residues" evidence="1">
    <location>
        <begin position="239"/>
        <end position="258"/>
    </location>
</feature>
<reference key="1">
    <citation type="journal article" date="1994" name="EMBO J.">
        <title>Complete DNA sequence of yeast chromosome II.</title>
        <authorList>
            <person name="Feldmann H."/>
            <person name="Aigle M."/>
            <person name="Aljinovic G."/>
            <person name="Andre B."/>
            <person name="Baclet M.C."/>
            <person name="Barthe C."/>
            <person name="Baur A."/>
            <person name="Becam A.-M."/>
            <person name="Biteau N."/>
            <person name="Boles E."/>
            <person name="Brandt T."/>
            <person name="Brendel M."/>
            <person name="Brueckner M."/>
            <person name="Bussereau F."/>
            <person name="Christiansen C."/>
            <person name="Contreras R."/>
            <person name="Crouzet M."/>
            <person name="Cziepluch C."/>
            <person name="Demolis N."/>
            <person name="Delaveau T."/>
            <person name="Doignon F."/>
            <person name="Domdey H."/>
            <person name="Duesterhus S."/>
            <person name="Dubois E."/>
            <person name="Dujon B."/>
            <person name="El Bakkoury M."/>
            <person name="Entian K.-D."/>
            <person name="Feuermann M."/>
            <person name="Fiers W."/>
            <person name="Fobo G.M."/>
            <person name="Fritz C."/>
            <person name="Gassenhuber J."/>
            <person name="Glansdorff N."/>
            <person name="Goffeau A."/>
            <person name="Grivell L.A."/>
            <person name="de Haan M."/>
            <person name="Hein C."/>
            <person name="Herbert C.J."/>
            <person name="Hollenberg C.P."/>
            <person name="Holmstroem K."/>
            <person name="Jacq C."/>
            <person name="Jacquet M."/>
            <person name="Jauniaux J.-C."/>
            <person name="Jonniaux J.-L."/>
            <person name="Kallesoee T."/>
            <person name="Kiesau P."/>
            <person name="Kirchrath L."/>
            <person name="Koetter P."/>
            <person name="Korol S."/>
            <person name="Liebl S."/>
            <person name="Logghe M."/>
            <person name="Lohan A.J.E."/>
            <person name="Louis E.J."/>
            <person name="Li Z.Y."/>
            <person name="Maat M.J."/>
            <person name="Mallet L."/>
            <person name="Mannhaupt G."/>
            <person name="Messenguy F."/>
            <person name="Miosga T."/>
            <person name="Molemans F."/>
            <person name="Mueller S."/>
            <person name="Nasr F."/>
            <person name="Obermaier B."/>
            <person name="Perea J."/>
            <person name="Pierard A."/>
            <person name="Piravandi E."/>
            <person name="Pohl F.M."/>
            <person name="Pohl T.M."/>
            <person name="Potier S."/>
            <person name="Proft M."/>
            <person name="Purnelle B."/>
            <person name="Ramezani Rad M."/>
            <person name="Rieger M."/>
            <person name="Rose M."/>
            <person name="Schaaff-Gerstenschlaeger I."/>
            <person name="Scherens B."/>
            <person name="Schwarzlose C."/>
            <person name="Skala J."/>
            <person name="Slonimski P.P."/>
            <person name="Smits P.H.M."/>
            <person name="Souciet J.-L."/>
            <person name="Steensma H.Y."/>
            <person name="Stucka R."/>
            <person name="Urrestarazu L.A."/>
            <person name="van der Aart Q.J.M."/>
            <person name="Van Dyck L."/>
            <person name="Vassarotti A."/>
            <person name="Vetter I."/>
            <person name="Vierendeels F."/>
            <person name="Vissers S."/>
            <person name="Wagner G."/>
            <person name="de Wergifosse P."/>
            <person name="Wolfe K.H."/>
            <person name="Zagulski M."/>
            <person name="Zimmermann F.K."/>
            <person name="Mewes H.-W."/>
            <person name="Kleine K."/>
        </authorList>
    </citation>
    <scope>NUCLEOTIDE SEQUENCE [LARGE SCALE GENOMIC DNA]</scope>
    <source>
        <strain>ATCC 204508 / S288c</strain>
    </source>
</reference>
<reference key="2">
    <citation type="journal article" date="2014" name="G3 (Bethesda)">
        <title>The reference genome sequence of Saccharomyces cerevisiae: Then and now.</title>
        <authorList>
            <person name="Engel S.R."/>
            <person name="Dietrich F.S."/>
            <person name="Fisk D.G."/>
            <person name="Binkley G."/>
            <person name="Balakrishnan R."/>
            <person name="Costanzo M.C."/>
            <person name="Dwight S.S."/>
            <person name="Hitz B.C."/>
            <person name="Karra K."/>
            <person name="Nash R.S."/>
            <person name="Weng S."/>
            <person name="Wong E.D."/>
            <person name="Lloyd P."/>
            <person name="Skrzypek M.S."/>
            <person name="Miyasato S.R."/>
            <person name="Simison M."/>
            <person name="Cherry J.M."/>
        </authorList>
    </citation>
    <scope>GENOME REANNOTATION</scope>
    <source>
        <strain>ATCC 204508 / S288c</strain>
    </source>
</reference>
<reference key="3">
    <citation type="journal article" date="2007" name="Genome Res.">
        <title>Approaching a complete repository of sequence-verified protein-encoding clones for Saccharomyces cerevisiae.</title>
        <authorList>
            <person name="Hu Y."/>
            <person name="Rolfs A."/>
            <person name="Bhullar B."/>
            <person name="Murthy T.V.S."/>
            <person name="Zhu C."/>
            <person name="Berger M.F."/>
            <person name="Camargo A.A."/>
            <person name="Kelley F."/>
            <person name="McCarron S."/>
            <person name="Jepson D."/>
            <person name="Richardson A."/>
            <person name="Raphael J."/>
            <person name="Moreira D."/>
            <person name="Taycher E."/>
            <person name="Zuo D."/>
            <person name="Mohr S."/>
            <person name="Kane M.F."/>
            <person name="Williamson J."/>
            <person name="Simpson A.J.G."/>
            <person name="Bulyk M.L."/>
            <person name="Harlow E."/>
            <person name="Marsischky G."/>
            <person name="Kolodner R.D."/>
            <person name="LaBaer J."/>
        </authorList>
    </citation>
    <scope>NUCLEOTIDE SEQUENCE [GENOMIC DNA]</scope>
    <source>
        <strain>ATCC 204508 / S288c</strain>
    </source>
</reference>
<reference key="4">
    <citation type="journal article" date="1999" name="EMBO J.">
        <title>Identification by mass spectrometry and functional analysis of novel proteins of the yeast [U4/U6.U5] tri-snRNP.</title>
        <authorList>
            <person name="Gottschalk A."/>
            <person name="Neubauer G."/>
            <person name="Banroques J."/>
            <person name="Mann M."/>
            <person name="Luehrmann R."/>
            <person name="Fabrizio P."/>
        </authorList>
    </citation>
    <scope>PROTEIN SEQUENCE OF 157-169</scope>
    <scope>SUBUNIT</scope>
    <scope>IDENTIFICATION IN THE U4/U5/U6 TRI-SNRNP COMPLEX</scope>
    <scope>IDENTIFICATION BY MASS SPECTROMETRY</scope>
</reference>
<reference key="5">
    <citation type="journal article" date="1999" name="Mol. Cell. Biol.">
        <title>Elevated levels of a U4/U6.U5 snRNP-associated protein, Spp381p, rescue a mutant defective in spliceosome maturation.</title>
        <authorList>
            <person name="Lybarger S."/>
            <person name="Beickman K."/>
            <person name="Brown V."/>
            <person name="Dembla-Rajpal N."/>
            <person name="Morey K."/>
            <person name="Seipelt R."/>
            <person name="Rymond B.C."/>
        </authorList>
    </citation>
    <scope>FUNCTION</scope>
    <scope>IDENTIFICATION IN U4/U6.U5 TRI-SNRNP COMPLEX</scope>
    <scope>INTERACTION WITH PRP38</scope>
</reference>
<reference key="6">
    <citation type="journal article" date="2002" name="Mol. Cell">
        <title>Composition and functional characterization of the yeast spliceosomal penta-snRNP.</title>
        <authorList>
            <person name="Stevens S.W."/>
            <person name="Ryan D.E."/>
            <person name="Ge H.Y."/>
            <person name="Moore R.E."/>
            <person name="Young M.K."/>
            <person name="Lee T.D."/>
            <person name="Abelson J."/>
        </authorList>
    </citation>
    <scope>IDENTIFICATION IN U1.U2.U4/U6.U5 PENTA-SNRNP COMPLEX</scope>
    <scope>IDENTIFICATION BY MASS SPECTROMETRY</scope>
</reference>
<reference key="7">
    <citation type="journal article" date="2003" name="Nature">
        <title>Global analysis of protein localization in budding yeast.</title>
        <authorList>
            <person name="Huh W.-K."/>
            <person name="Falvo J.V."/>
            <person name="Gerke L.C."/>
            <person name="Carroll A.S."/>
            <person name="Howson R.W."/>
            <person name="Weissman J.S."/>
            <person name="O'Shea E.K."/>
        </authorList>
    </citation>
    <scope>SUBCELLULAR LOCATION [LARGE SCALE ANALYSIS]</scope>
</reference>
<reference key="8">
    <citation type="journal article" date="2003" name="Nature">
        <title>Global analysis of protein expression in yeast.</title>
        <authorList>
            <person name="Ghaemmaghami S."/>
            <person name="Huh W.-K."/>
            <person name="Bower K."/>
            <person name="Howson R.W."/>
            <person name="Belle A."/>
            <person name="Dephoure N."/>
            <person name="O'Shea E.K."/>
            <person name="Weissman J.S."/>
        </authorList>
    </citation>
    <scope>LEVEL OF PROTEIN EXPRESSION [LARGE SCALE ANALYSIS]</scope>
</reference>
<reference key="9">
    <citation type="journal article" date="2008" name="Mol. Cell. Proteomics">
        <title>A multidimensional chromatography technology for in-depth phosphoproteome analysis.</title>
        <authorList>
            <person name="Albuquerque C.P."/>
            <person name="Smolka M.B."/>
            <person name="Payne S.H."/>
            <person name="Bafna V."/>
            <person name="Eng J."/>
            <person name="Zhou H."/>
        </authorList>
    </citation>
    <scope>IDENTIFICATION BY MASS SPECTROMETRY [LARGE SCALE ANALYSIS]</scope>
</reference>
<comment type="function">
    <text evidence="6">Component of the spliceosome and rRNA processing machinery. In association with the spliceosomal U4/U6.U5 tri-snRNP particle, required for splicing of pre-mRNA.</text>
</comment>
<comment type="subunit">
    <text evidence="2 3 6">Component of the U4/U6-U5 tri-snRNP complex composed of the U4, U6 and U5 snRNAs and at least PRP3, PRP4, PRP6, PRP8, PRP18, PRP31, PRP38, SNU13, SNU23, SNU66, SNU114, SPP381, SMB1, SMD1, SMD2, SMD3, SMX2, SMX3, LSM2, LSM3, LSM4, LSM5, LSM6, LSM7, LSM8, BRR2 and DIB1. Interacts with PRP38.</text>
</comment>
<comment type="interaction">
    <interactant intactId="EBI-443">
        <id>P38282</id>
    </interactant>
    <interactant intactId="EBI-841">
        <id>Q00723</id>
        <label>PRP38</label>
    </interactant>
    <organismsDiffer>false</organismsDiffer>
    <experiments>3</experiments>
</comment>
<comment type="subcellular location">
    <subcellularLocation>
        <location evidence="4">Nucleus</location>
    </subcellularLocation>
</comment>
<comment type="miscellaneous">
    <text evidence="5">Present with 2510 molecules/cell in log phase SD medium.</text>
</comment>
<comment type="similarity">
    <text evidence="7">Belongs to the SPP381 family.</text>
</comment>
<sequence>MSFRHFKRRLDTSSADESSSADEEHPDQNVSLTEKSASLSHSDLGGEILNGTGKNRTPNDGQESNESDGSPESDESPESEESSDNSDSSDSDDMRPLPRPLFMKKKANNLQKATKIDQPWNAQDDARVLQTKKENMIKNIDKANQVAKNYETMKLRLNTNYSTNEELIKQCLLLDDNDEVDSEKERQKWFERQNERKQKHRRIQLAKQRESEEYEAKRFEAMQKGKDGNTKYDVILDKEKEKLDHKKQRSAEKVEKSHNNNRYKITRTKNVEFGDLGKNSRDYEETEYSVI</sequence>
<keyword id="KW-0002">3D-structure</keyword>
<keyword id="KW-0903">Direct protein sequencing</keyword>
<keyword id="KW-0507">mRNA processing</keyword>
<keyword id="KW-0508">mRNA splicing</keyword>
<keyword id="KW-0539">Nucleus</keyword>
<keyword id="KW-1185">Reference proteome</keyword>
<keyword id="KW-0687">Ribonucleoprotein</keyword>
<keyword id="KW-0694">RNA-binding</keyword>
<keyword id="KW-0747">Spliceosome</keyword>
<name>SP381_YEAST</name>
<proteinExistence type="evidence at protein level"/>
<protein>
    <recommendedName>
        <fullName>Pre-mRNA-splicing factor SPP381</fullName>
    </recommendedName>
    <alternativeName>
        <fullName>Suppressor of PRP38-1 mutation</fullName>
    </alternativeName>
</protein>